<evidence type="ECO:0000255" key="1">
    <source>
        <dbReference type="HAMAP-Rule" id="MF_00553"/>
    </source>
</evidence>
<sequence>MEETGVKDVRDLCEKFLDFKREKERLEELLKEYFKRLEELERKLRAHEEKLRIEARRRKTLEKELEMERDEKAELREELRRKEVMIEKLRSDLQRMKKPPLIVGTVEEILDDGRVIVKSSTGPKFVSNVSPTVDRNELEPGANVALNQQSMAVVDVLPSEKDSRVLAMEVDESPDVSYDDIGGLDEQIREIREVVEKPLKEPELFEKVGVEPPKGVLLYGPPGTGKTLLAKAVANHADATFIRLAAPELVQKFIGEGARLVRELFELAREKAPSIIFIDEIDAIGARRMRDATSGDREVQRTLTQLLAEMDGFDPLDDIKVIAATNRKDILDPALLRPGRFDRHIKIPLPDEEGRYEIFKIHTRDMNLAEDVDLQKLAKITEGASGADIKAICTEAGMMAIREDRDIVTMDDFLKAVDRVMGKKEEESGEFKRAYH</sequence>
<keyword id="KW-0067">ATP-binding</keyword>
<keyword id="KW-0143">Chaperone</keyword>
<keyword id="KW-0175">Coiled coil</keyword>
<keyword id="KW-0963">Cytoplasm</keyword>
<keyword id="KW-0547">Nucleotide-binding</keyword>
<keyword id="KW-0647">Proteasome</keyword>
<keyword id="KW-1185">Reference proteome</keyword>
<gene>
    <name evidence="1" type="primary">pan</name>
    <name type="ordered locus">MK0878</name>
</gene>
<organism>
    <name type="scientific">Methanopyrus kandleri (strain AV19 / DSM 6324 / JCM 9639 / NBRC 100938)</name>
    <dbReference type="NCBI Taxonomy" id="190192"/>
    <lineage>
        <taxon>Archaea</taxon>
        <taxon>Methanobacteriati</taxon>
        <taxon>Methanobacteriota</taxon>
        <taxon>Methanomada group</taxon>
        <taxon>Methanopyri</taxon>
        <taxon>Methanopyrales</taxon>
        <taxon>Methanopyraceae</taxon>
        <taxon>Methanopyrus</taxon>
    </lineage>
</organism>
<feature type="chain" id="PRO_0000084744" description="Proteasome-activating nucleotidase">
    <location>
        <begin position="1"/>
        <end position="436"/>
    </location>
</feature>
<feature type="region of interest" description="Docks into pockets in the proteasome alpha-ring to cause gate opening" evidence="1">
    <location>
        <begin position="434"/>
        <end position="436"/>
    </location>
</feature>
<feature type="coiled-coil region" evidence="1">
    <location>
        <begin position="7"/>
        <end position="98"/>
    </location>
</feature>
<feature type="binding site" evidence="1">
    <location>
        <begin position="223"/>
        <end position="228"/>
    </location>
    <ligand>
        <name>ATP</name>
        <dbReference type="ChEBI" id="CHEBI:30616"/>
    </ligand>
</feature>
<feature type="binding site" evidence="1">
    <location>
        <position position="362"/>
    </location>
    <ligand>
        <name>ATP</name>
        <dbReference type="ChEBI" id="CHEBI:30616"/>
    </ligand>
</feature>
<protein>
    <recommendedName>
        <fullName evidence="1">Proteasome-activating nucleotidase</fullName>
        <shortName evidence="1">PAN</shortName>
    </recommendedName>
    <alternativeName>
        <fullName evidence="1">Proteasomal ATPase</fullName>
    </alternativeName>
    <alternativeName>
        <fullName evidence="1">Proteasome regulatory ATPase</fullName>
    </alternativeName>
    <alternativeName>
        <fullName evidence="1">Proteasome regulatory particle</fullName>
    </alternativeName>
</protein>
<dbReference type="EMBL" id="AE009439">
    <property type="protein sequence ID" value="AAM02091.1"/>
    <property type="molecule type" value="Genomic_DNA"/>
</dbReference>
<dbReference type="SMR" id="Q8TX03"/>
<dbReference type="FunCoup" id="Q8TX03">
    <property type="interactions" value="118"/>
</dbReference>
<dbReference type="STRING" id="190192.MK0878"/>
<dbReference type="PaxDb" id="190192-MK0878"/>
<dbReference type="EnsemblBacteria" id="AAM02091">
    <property type="protein sequence ID" value="AAM02091"/>
    <property type="gene ID" value="MK0878"/>
</dbReference>
<dbReference type="KEGG" id="mka:MK0878"/>
<dbReference type="PATRIC" id="fig|190192.8.peg.919"/>
<dbReference type="HOGENOM" id="CLU_000688_2_2_2"/>
<dbReference type="InParanoid" id="Q8TX03"/>
<dbReference type="Proteomes" id="UP000001826">
    <property type="component" value="Chromosome"/>
</dbReference>
<dbReference type="GO" id="GO:0005737">
    <property type="term" value="C:cytoplasm"/>
    <property type="evidence" value="ECO:0007669"/>
    <property type="project" value="UniProtKB-SubCell"/>
</dbReference>
<dbReference type="GO" id="GO:0022623">
    <property type="term" value="C:proteasome-activating nucleotidase complex"/>
    <property type="evidence" value="ECO:0007669"/>
    <property type="project" value="UniProtKB-UniRule"/>
</dbReference>
<dbReference type="GO" id="GO:0005524">
    <property type="term" value="F:ATP binding"/>
    <property type="evidence" value="ECO:0007669"/>
    <property type="project" value="UniProtKB-UniRule"/>
</dbReference>
<dbReference type="GO" id="GO:0016887">
    <property type="term" value="F:ATP hydrolysis activity"/>
    <property type="evidence" value="ECO:0007669"/>
    <property type="project" value="UniProtKB-UniRule"/>
</dbReference>
<dbReference type="GO" id="GO:0010498">
    <property type="term" value="P:proteasomal protein catabolic process"/>
    <property type="evidence" value="ECO:0007669"/>
    <property type="project" value="UniProtKB-UniRule"/>
</dbReference>
<dbReference type="GO" id="GO:0043335">
    <property type="term" value="P:protein unfolding"/>
    <property type="evidence" value="ECO:0007669"/>
    <property type="project" value="UniProtKB-UniRule"/>
</dbReference>
<dbReference type="CDD" id="cd19502">
    <property type="entry name" value="RecA-like_PAN_like"/>
    <property type="match status" value="1"/>
</dbReference>
<dbReference type="FunFam" id="1.10.8.60:FF:000006">
    <property type="entry name" value="26S protease regulatory subunit 8"/>
    <property type="match status" value="1"/>
</dbReference>
<dbReference type="FunFam" id="3.40.50.300:FF:000030">
    <property type="entry name" value="26S protease regulatory subunit 8"/>
    <property type="match status" value="1"/>
</dbReference>
<dbReference type="Gene3D" id="1.10.8.60">
    <property type="match status" value="1"/>
</dbReference>
<dbReference type="Gene3D" id="2.40.50.140">
    <property type="entry name" value="Nucleic acid-binding proteins"/>
    <property type="match status" value="1"/>
</dbReference>
<dbReference type="Gene3D" id="3.40.50.300">
    <property type="entry name" value="P-loop containing nucleotide triphosphate hydrolases"/>
    <property type="match status" value="1"/>
</dbReference>
<dbReference type="HAMAP" id="MF_00553">
    <property type="entry name" value="PAN"/>
    <property type="match status" value="1"/>
</dbReference>
<dbReference type="InterPro" id="IPR050221">
    <property type="entry name" value="26S_Proteasome_ATPase"/>
</dbReference>
<dbReference type="InterPro" id="IPR003593">
    <property type="entry name" value="AAA+_ATPase"/>
</dbReference>
<dbReference type="InterPro" id="IPR041569">
    <property type="entry name" value="AAA_lid_3"/>
</dbReference>
<dbReference type="InterPro" id="IPR003959">
    <property type="entry name" value="ATPase_AAA_core"/>
</dbReference>
<dbReference type="InterPro" id="IPR003960">
    <property type="entry name" value="ATPase_AAA_CS"/>
</dbReference>
<dbReference type="InterPro" id="IPR012340">
    <property type="entry name" value="NA-bd_OB-fold"/>
</dbReference>
<dbReference type="InterPro" id="IPR023501">
    <property type="entry name" value="Nucleotidase_PAN"/>
</dbReference>
<dbReference type="InterPro" id="IPR027417">
    <property type="entry name" value="P-loop_NTPase"/>
</dbReference>
<dbReference type="InterPro" id="IPR032501">
    <property type="entry name" value="Prot_ATP_ID_OB_2nd"/>
</dbReference>
<dbReference type="NCBIfam" id="NF003069">
    <property type="entry name" value="PRK03992.1"/>
    <property type="match status" value="1"/>
</dbReference>
<dbReference type="NCBIfam" id="TIGR01242">
    <property type="entry name" value="proteasome-activating nucleotidase"/>
    <property type="match status" value="1"/>
</dbReference>
<dbReference type="PANTHER" id="PTHR23073">
    <property type="entry name" value="26S PROTEASOME REGULATORY SUBUNIT"/>
    <property type="match status" value="1"/>
</dbReference>
<dbReference type="Pfam" id="PF00004">
    <property type="entry name" value="AAA"/>
    <property type="match status" value="1"/>
</dbReference>
<dbReference type="Pfam" id="PF17862">
    <property type="entry name" value="AAA_lid_3"/>
    <property type="match status" value="1"/>
</dbReference>
<dbReference type="Pfam" id="PF16450">
    <property type="entry name" value="Prot_ATP_ID_OB_C"/>
    <property type="match status" value="1"/>
</dbReference>
<dbReference type="SMART" id="SM00382">
    <property type="entry name" value="AAA"/>
    <property type="match status" value="1"/>
</dbReference>
<dbReference type="SUPFAM" id="SSF52540">
    <property type="entry name" value="P-loop containing nucleoside triphosphate hydrolases"/>
    <property type="match status" value="1"/>
</dbReference>
<dbReference type="PROSITE" id="PS00674">
    <property type="entry name" value="AAA"/>
    <property type="match status" value="1"/>
</dbReference>
<name>PAN_METKA</name>
<comment type="function">
    <text evidence="1">ATPase which is responsible for recognizing, binding, unfolding and translocation of substrate proteins into the archaeal 20S proteasome core particle. Is essential for opening the gate of the 20S proteasome via an interaction with its C-terminus, thereby allowing substrate entry and access to the site of proteolysis. Thus, the C-termini of the proteasomal ATPase function like a 'key in a lock' to induce gate opening and therefore regulate proteolysis. Unfolding activity requires energy from ATP hydrolysis, whereas ATP binding alone promotes ATPase-20S proteasome association which triggers gate opening, and supports translocation of unfolded substrates.</text>
</comment>
<comment type="subunit">
    <text evidence="1">Homohexamer. The hexameric complex has a two-ring architecture resembling a top hat that caps the 20S proteasome core at one or both ends. Upon ATP-binding, the C-terminus of PAN interacts with the alpha-rings of the proteasome core by binding to the intersubunit pockets.</text>
</comment>
<comment type="subcellular location">
    <subcellularLocation>
        <location evidence="1">Cytoplasm</location>
    </subcellularLocation>
</comment>
<comment type="domain">
    <text evidence="1">Consists of three main regions, an N-terminal coiled-coil domain that may assist in substrate recognition, an interdomain involved in PAN hexamerization, and a C-terminal ATPase domain of the AAA type.</text>
</comment>
<comment type="similarity">
    <text evidence="1">Belongs to the AAA ATPase family.</text>
</comment>
<accession>Q8TX03</accession>
<proteinExistence type="inferred from homology"/>
<reference key="1">
    <citation type="journal article" date="2002" name="Proc. Natl. Acad. Sci. U.S.A.">
        <title>The complete genome of hyperthermophile Methanopyrus kandleri AV19 and monophyly of archaeal methanogens.</title>
        <authorList>
            <person name="Slesarev A.I."/>
            <person name="Mezhevaya K.V."/>
            <person name="Makarova K.S."/>
            <person name="Polushin N.N."/>
            <person name="Shcherbinina O.V."/>
            <person name="Shakhova V.V."/>
            <person name="Belova G.I."/>
            <person name="Aravind L."/>
            <person name="Natale D.A."/>
            <person name="Rogozin I.B."/>
            <person name="Tatusov R.L."/>
            <person name="Wolf Y.I."/>
            <person name="Stetter K.O."/>
            <person name="Malykh A.G."/>
            <person name="Koonin E.V."/>
            <person name="Kozyavkin S.A."/>
        </authorList>
    </citation>
    <scope>NUCLEOTIDE SEQUENCE [LARGE SCALE GENOMIC DNA]</scope>
    <source>
        <strain>AV19 / DSM 6324 / JCM 9639 / NBRC 100938</strain>
    </source>
</reference>